<dbReference type="EMBL" id="AE016853">
    <property type="protein sequence ID" value="AAO54764.1"/>
    <property type="molecule type" value="Genomic_DNA"/>
</dbReference>
<dbReference type="RefSeq" id="NP_791069.1">
    <property type="nucleotide sequence ID" value="NC_004578.1"/>
</dbReference>
<dbReference type="RefSeq" id="WP_005615404.1">
    <property type="nucleotide sequence ID" value="NC_004578.1"/>
</dbReference>
<dbReference type="SMR" id="Q887Q2"/>
<dbReference type="STRING" id="223283.PSPTO_1239"/>
<dbReference type="KEGG" id="pst:PSPTO_1239"/>
<dbReference type="PATRIC" id="fig|223283.9.peg.1260"/>
<dbReference type="eggNOG" id="ENOG5030R50">
    <property type="taxonomic scope" value="Bacteria"/>
</dbReference>
<dbReference type="HOGENOM" id="CLU_564755_0_0_6"/>
<dbReference type="OrthoDB" id="6189846at2"/>
<dbReference type="PhylomeDB" id="Q887Q2"/>
<dbReference type="UniPathway" id="UPA00286"/>
<dbReference type="Proteomes" id="UP000002515">
    <property type="component" value="Chromosome"/>
</dbReference>
<dbReference type="GO" id="GO:0009279">
    <property type="term" value="C:cell outer membrane"/>
    <property type="evidence" value="ECO:0007669"/>
    <property type="project" value="UniProtKB-SubCell"/>
</dbReference>
<dbReference type="GO" id="GO:0042121">
    <property type="term" value="P:alginic acid biosynthetic process"/>
    <property type="evidence" value="ECO:0007669"/>
    <property type="project" value="UniProtKB-UniPathway"/>
</dbReference>
<dbReference type="Gene3D" id="2.40.160.100">
    <property type="match status" value="1"/>
</dbReference>
<dbReference type="InterPro" id="IPR025388">
    <property type="entry name" value="Alginate_export_dom"/>
</dbReference>
<dbReference type="InterPro" id="IPR053728">
    <property type="entry name" value="Alginate_Permeability_Chnl"/>
</dbReference>
<dbReference type="Pfam" id="PF13372">
    <property type="entry name" value="Alginate_exp"/>
    <property type="match status" value="1"/>
</dbReference>
<keyword id="KW-0016">Alginate biosynthesis</keyword>
<keyword id="KW-0998">Cell outer membrane</keyword>
<keyword id="KW-0472">Membrane</keyword>
<keyword id="KW-1185">Reference proteome</keyword>
<keyword id="KW-0732">Signal</keyword>
<protein>
    <recommendedName>
        <fullName>Alginate production protein AlgE</fullName>
    </recommendedName>
</protein>
<evidence type="ECO:0000250" key="1"/>
<evidence type="ECO:0000255" key="2"/>
<evidence type="ECO:0000256" key="3">
    <source>
        <dbReference type="SAM" id="MobiDB-lite"/>
    </source>
</evidence>
<evidence type="ECO:0000305" key="4"/>
<comment type="function">
    <text evidence="1">Has non-porin-like, channel-forming properties and probably functions as an alginate permeability pore.</text>
</comment>
<comment type="pathway">
    <text>Glycan biosynthesis; alginate biosynthesis.</text>
</comment>
<comment type="subcellular location">
    <subcellularLocation>
        <location evidence="1">Cell outer membrane</location>
        <topology evidence="1">Peripheral membrane protein</topology>
    </subcellularLocation>
</comment>
<comment type="similarity">
    <text evidence="4">Belongs to the AlgE family.</text>
</comment>
<name>ALGE_PSESM</name>
<gene>
    <name type="primary">algE</name>
    <name type="ordered locus">PSPTO_1239</name>
</gene>
<sequence>MKLNPLMAAGMGLGFTLFWACPTLAALTEQQNFGIEIKATAQAEDDRDLGTRSGGDVNGVGLDLRPWVYGERGDWSGYAMGQVVTATDTIQTDPLEQSNSDGSGTQTSRGTASEREVEKSYAALREFWIGYSGFTPYPGEILKVGRQRLRNDDGQWHDTNIEAINWNFDTTLLRAELGAAQRFSEYRTDLTELAPDDEDRKHLFGSASYQWTPGHWAGVRAHYSHDDGKLKSQGEQLDDLDKTSNGNLTWLGLQADSDAYNYRNTTPLNYWGSLTWLNGTRDEIGVTSAANDQFFAGEKNSRDMNGWATDLGLRLRLDPQWQVGAAYSRASKDYIQNGLESNRSNWTGTRSRIHRFGEAFQGEMANVETGSLFASWQMNEEYDASLIYHKFRRVDGNTGIGGSGINAVRENGDSNTFSSLPLEDGRKDLGQEMDLVVTKYFKQGLLPASLSQSFDEPSALVRLRAGVFKPGDAYHNGVDEYMHRAVVDVIWRF</sequence>
<proteinExistence type="inferred from homology"/>
<feature type="signal peptide" evidence="2">
    <location>
        <begin position="1"/>
        <end position="25"/>
    </location>
</feature>
<feature type="chain" id="PRO_0000020665" description="Alginate production protein AlgE">
    <location>
        <begin position="26"/>
        <end position="493"/>
    </location>
</feature>
<feature type="region of interest" description="Disordered" evidence="3">
    <location>
        <begin position="93"/>
        <end position="115"/>
    </location>
</feature>
<feature type="compositionally biased region" description="Polar residues" evidence="3">
    <location>
        <begin position="93"/>
        <end position="111"/>
    </location>
</feature>
<reference key="1">
    <citation type="journal article" date="2003" name="Proc. Natl. Acad. Sci. U.S.A.">
        <title>The complete genome sequence of the Arabidopsis and tomato pathogen Pseudomonas syringae pv. tomato DC3000.</title>
        <authorList>
            <person name="Buell C.R."/>
            <person name="Joardar V."/>
            <person name="Lindeberg M."/>
            <person name="Selengut J."/>
            <person name="Paulsen I.T."/>
            <person name="Gwinn M.L."/>
            <person name="Dodson R.J."/>
            <person name="DeBoy R.T."/>
            <person name="Durkin A.S."/>
            <person name="Kolonay J.F."/>
            <person name="Madupu R."/>
            <person name="Daugherty S.C."/>
            <person name="Brinkac L.M."/>
            <person name="Beanan M.J."/>
            <person name="Haft D.H."/>
            <person name="Nelson W.C."/>
            <person name="Davidsen T.M."/>
            <person name="Zafar N."/>
            <person name="Zhou L."/>
            <person name="Liu J."/>
            <person name="Yuan Q."/>
            <person name="Khouri H.M."/>
            <person name="Fedorova N.B."/>
            <person name="Tran B."/>
            <person name="Russell D."/>
            <person name="Berry K.J."/>
            <person name="Utterback T.R."/>
            <person name="Van Aken S.E."/>
            <person name="Feldblyum T.V."/>
            <person name="D'Ascenzo M."/>
            <person name="Deng W.-L."/>
            <person name="Ramos A.R."/>
            <person name="Alfano J.R."/>
            <person name="Cartinhour S."/>
            <person name="Chatterjee A.K."/>
            <person name="Delaney T.P."/>
            <person name="Lazarowitz S.G."/>
            <person name="Martin G.B."/>
            <person name="Schneider D.J."/>
            <person name="Tang X."/>
            <person name="Bender C.L."/>
            <person name="White O."/>
            <person name="Fraser C.M."/>
            <person name="Collmer A."/>
        </authorList>
    </citation>
    <scope>NUCLEOTIDE SEQUENCE [LARGE SCALE GENOMIC DNA]</scope>
    <source>
        <strain>ATCC BAA-871 / DC3000</strain>
    </source>
</reference>
<accession>Q887Q2</accession>
<organism>
    <name type="scientific">Pseudomonas syringae pv. tomato (strain ATCC BAA-871 / DC3000)</name>
    <dbReference type="NCBI Taxonomy" id="223283"/>
    <lineage>
        <taxon>Bacteria</taxon>
        <taxon>Pseudomonadati</taxon>
        <taxon>Pseudomonadota</taxon>
        <taxon>Gammaproteobacteria</taxon>
        <taxon>Pseudomonadales</taxon>
        <taxon>Pseudomonadaceae</taxon>
        <taxon>Pseudomonas</taxon>
    </lineage>
</organism>